<name>YDDE_SALTY</name>
<proteinExistence type="inferred from homology"/>
<sequence>MKPQIYHVDAFTGDPFRGNSAGVVLHADTLSDAQMQLIARELRHSETAFLLKSEESDVRIRYFTPTVEVPICGHATVAAHYVRATVLGLGNTTVWQTSLAGRHRVEIHAEHNDYRITLEQGQPSFEPPLVGEIRAAIITALNLTEDDIVPGAPIQVASTGHAKVMILLKPDVDIDALSPNLAALTAISQQIGCNGFFPFQIRPGKNETDGRMFSPAIGIVEDPVTGNANGPMGAWLVHHGLMAHDGKTLQIQGHQGRALGKEGTVDVTVTIRDNQPENVTISGQAVILFHAEWAITF</sequence>
<evidence type="ECO:0000250" key="1"/>
<evidence type="ECO:0000305" key="2"/>
<reference key="1">
    <citation type="journal article" date="2001" name="Nature">
        <title>Complete genome sequence of Salmonella enterica serovar Typhimurium LT2.</title>
        <authorList>
            <person name="McClelland M."/>
            <person name="Sanderson K.E."/>
            <person name="Spieth J."/>
            <person name="Clifton S.W."/>
            <person name="Latreille P."/>
            <person name="Courtney L."/>
            <person name="Porwollik S."/>
            <person name="Ali J."/>
            <person name="Dante M."/>
            <person name="Du F."/>
            <person name="Hou S."/>
            <person name="Layman D."/>
            <person name="Leonard S."/>
            <person name="Nguyen C."/>
            <person name="Scott K."/>
            <person name="Holmes A."/>
            <person name="Grewal N."/>
            <person name="Mulvaney E."/>
            <person name="Ryan E."/>
            <person name="Sun H."/>
            <person name="Florea L."/>
            <person name="Miller W."/>
            <person name="Stoneking T."/>
            <person name="Nhan M."/>
            <person name="Waterston R."/>
            <person name="Wilson R.K."/>
        </authorList>
    </citation>
    <scope>NUCLEOTIDE SEQUENCE [LARGE SCALE GENOMIC DNA]</scope>
    <source>
        <strain>LT2 / SGSC1412 / ATCC 700720</strain>
    </source>
</reference>
<reference key="2">
    <citation type="journal article" date="1992" name="J. Biol. Chem.">
        <title>Involvement of Cys69 residue in the catalytic mechanism of N-hydroxyarylamine O-acetyltransferase of Salmonella typhimurium. Sequence similarity at the amino acid level suggests a common catalytic mechanism of acetyltransferase for S. typhimurium and higher organisms.</title>
        <authorList>
            <person name="Watanabe M."/>
            <person name="Sofuni T."/>
            <person name="Nohmi T."/>
        </authorList>
    </citation>
    <scope>NUCLEOTIDE SEQUENCE [GENOMIC DNA] OF 166-297</scope>
</reference>
<reference key="3">
    <citation type="unpublished observations" date="1995-01">
        <authorList>
            <person name="Rudd K.E."/>
        </authorList>
    </citation>
    <scope>IDENTIFICATION</scope>
</reference>
<organism>
    <name type="scientific">Salmonella typhimurium (strain LT2 / SGSC1412 / ATCC 700720)</name>
    <dbReference type="NCBI Taxonomy" id="99287"/>
    <lineage>
        <taxon>Bacteria</taxon>
        <taxon>Pseudomonadati</taxon>
        <taxon>Pseudomonadota</taxon>
        <taxon>Gammaproteobacteria</taxon>
        <taxon>Enterobacterales</taxon>
        <taxon>Enterobacteriaceae</taxon>
        <taxon>Salmonella</taxon>
    </lineage>
</organism>
<protein>
    <recommendedName>
        <fullName>Uncharacterized isomerase YddE</fullName>
        <ecNumber>5.1.-.-</ecNumber>
    </recommendedName>
</protein>
<keyword id="KW-0413">Isomerase</keyword>
<keyword id="KW-1185">Reference proteome</keyword>
<accession>P40788</accession>
<gene>
    <name type="primary">yddE</name>
    <name type="ordered locus">STM1581</name>
</gene>
<dbReference type="EC" id="5.1.-.-"/>
<dbReference type="EMBL" id="AE006468">
    <property type="protein sequence ID" value="AAL20499.1"/>
    <property type="molecule type" value="Genomic_DNA"/>
</dbReference>
<dbReference type="EMBL" id="D90301">
    <property type="status" value="NOT_ANNOTATED_CDS"/>
    <property type="molecule type" value="Genomic_DNA"/>
</dbReference>
<dbReference type="RefSeq" id="NP_460540.1">
    <property type="nucleotide sequence ID" value="NC_003197.2"/>
</dbReference>
<dbReference type="RefSeq" id="WP_000804282.1">
    <property type="nucleotide sequence ID" value="NC_003197.2"/>
</dbReference>
<dbReference type="SMR" id="P40788"/>
<dbReference type="STRING" id="99287.STM1581"/>
<dbReference type="PaxDb" id="99287-STM1581"/>
<dbReference type="GeneID" id="1253099"/>
<dbReference type="KEGG" id="stm:STM1581"/>
<dbReference type="PATRIC" id="fig|99287.12.peg.1672"/>
<dbReference type="HOGENOM" id="CLU_048756_0_2_6"/>
<dbReference type="OMA" id="KVGYNET"/>
<dbReference type="PhylomeDB" id="P40788"/>
<dbReference type="BioCyc" id="SENT99287:STM1581-MONOMER"/>
<dbReference type="Proteomes" id="UP000001014">
    <property type="component" value="Chromosome"/>
</dbReference>
<dbReference type="GO" id="GO:0005737">
    <property type="term" value="C:cytoplasm"/>
    <property type="evidence" value="ECO:0000318"/>
    <property type="project" value="GO_Central"/>
</dbReference>
<dbReference type="GO" id="GO:0016853">
    <property type="term" value="F:isomerase activity"/>
    <property type="evidence" value="ECO:0000318"/>
    <property type="project" value="GO_Central"/>
</dbReference>
<dbReference type="GO" id="GO:0009058">
    <property type="term" value="P:biosynthetic process"/>
    <property type="evidence" value="ECO:0007669"/>
    <property type="project" value="InterPro"/>
</dbReference>
<dbReference type="Gene3D" id="3.10.310.10">
    <property type="entry name" value="Diaminopimelate Epimerase, Chain A, domain 1"/>
    <property type="match status" value="2"/>
</dbReference>
<dbReference type="InterPro" id="IPR003719">
    <property type="entry name" value="Phenazine_PhzF-like"/>
</dbReference>
<dbReference type="NCBIfam" id="TIGR00654">
    <property type="entry name" value="PhzF_family"/>
    <property type="match status" value="1"/>
</dbReference>
<dbReference type="NCBIfam" id="NF007625">
    <property type="entry name" value="PRK10281.1"/>
    <property type="match status" value="1"/>
</dbReference>
<dbReference type="PANTHER" id="PTHR13774:SF39">
    <property type="entry name" value="BIOSYNTHESIS PROTEIN, PUTATIVE-RELATED"/>
    <property type="match status" value="1"/>
</dbReference>
<dbReference type="PANTHER" id="PTHR13774">
    <property type="entry name" value="PHENAZINE BIOSYNTHESIS PROTEIN"/>
    <property type="match status" value="1"/>
</dbReference>
<dbReference type="Pfam" id="PF02567">
    <property type="entry name" value="PhzC-PhzF"/>
    <property type="match status" value="1"/>
</dbReference>
<dbReference type="PIRSF" id="PIRSF016184">
    <property type="entry name" value="PhzC_PhzF"/>
    <property type="match status" value="1"/>
</dbReference>
<dbReference type="SUPFAM" id="SSF54506">
    <property type="entry name" value="Diaminopimelate epimerase-like"/>
    <property type="match status" value="1"/>
</dbReference>
<feature type="chain" id="PRO_0000162390" description="Uncharacterized isomerase YddE">
    <location>
        <begin position="1"/>
        <end position="297"/>
    </location>
</feature>
<feature type="active site" evidence="1">
    <location>
        <position position="46"/>
    </location>
</feature>
<comment type="subunit">
    <text evidence="1">Homodimer and homotetramer.</text>
</comment>
<comment type="similarity">
    <text evidence="2">Belongs to the PhzF family.</text>
</comment>